<organism>
    <name type="scientific">Shewanella frigidimarina (strain NCIMB 400)</name>
    <dbReference type="NCBI Taxonomy" id="318167"/>
    <lineage>
        <taxon>Bacteria</taxon>
        <taxon>Pseudomonadati</taxon>
        <taxon>Pseudomonadota</taxon>
        <taxon>Gammaproteobacteria</taxon>
        <taxon>Alteromonadales</taxon>
        <taxon>Shewanellaceae</taxon>
        <taxon>Shewanella</taxon>
    </lineage>
</organism>
<keyword id="KW-0131">Cell cycle</keyword>
<keyword id="KW-0132">Cell division</keyword>
<keyword id="KW-1185">Reference proteome</keyword>
<keyword id="KW-0717">Septation</keyword>
<proteinExistence type="inferred from homology"/>
<sequence>MAKQNLELKATSFTLSVLHINHNDLDIIAAELDNKLAQAPQFFLGAPLVLNLSAIQHTHIDFNALKQLLIDRNLIIVGITDASAEQIEQAKSMAIAVVKSGKQARKAELPERATKIVKQNVRSGQQIYAQNADLIIFGAVGNGAEVIADGSIHIYGALRGKAMAGAAGDNQSVIIANSLEAELVSIAGQYWLTEHLQQYDLSQRGCVRLEGASLTVESLPQ</sequence>
<dbReference type="EMBL" id="CP000447">
    <property type="protein sequence ID" value="ABI71587.1"/>
    <property type="molecule type" value="Genomic_DNA"/>
</dbReference>
<dbReference type="RefSeq" id="WP_011637203.1">
    <property type="nucleotide sequence ID" value="NC_008345.1"/>
</dbReference>
<dbReference type="SMR" id="Q083H8"/>
<dbReference type="STRING" id="318167.Sfri_1737"/>
<dbReference type="DNASU" id="4277516"/>
<dbReference type="KEGG" id="sfr:Sfri_1737"/>
<dbReference type="eggNOG" id="COG0850">
    <property type="taxonomic scope" value="Bacteria"/>
</dbReference>
<dbReference type="HOGENOM" id="CLU_067812_0_1_6"/>
<dbReference type="OrthoDB" id="9794530at2"/>
<dbReference type="Proteomes" id="UP000000684">
    <property type="component" value="Chromosome"/>
</dbReference>
<dbReference type="GO" id="GO:0000902">
    <property type="term" value="P:cell morphogenesis"/>
    <property type="evidence" value="ECO:0007669"/>
    <property type="project" value="InterPro"/>
</dbReference>
<dbReference type="GO" id="GO:0000917">
    <property type="term" value="P:division septum assembly"/>
    <property type="evidence" value="ECO:0007669"/>
    <property type="project" value="UniProtKB-KW"/>
</dbReference>
<dbReference type="GO" id="GO:0051302">
    <property type="term" value="P:regulation of cell division"/>
    <property type="evidence" value="ECO:0007669"/>
    <property type="project" value="InterPro"/>
</dbReference>
<dbReference type="GO" id="GO:1901891">
    <property type="term" value="P:regulation of cell septum assembly"/>
    <property type="evidence" value="ECO:0007669"/>
    <property type="project" value="InterPro"/>
</dbReference>
<dbReference type="Gene3D" id="2.160.20.70">
    <property type="match status" value="1"/>
</dbReference>
<dbReference type="Gene3D" id="3.30.70.260">
    <property type="match status" value="1"/>
</dbReference>
<dbReference type="HAMAP" id="MF_00267">
    <property type="entry name" value="MinC"/>
    <property type="match status" value="1"/>
</dbReference>
<dbReference type="InterPro" id="IPR016098">
    <property type="entry name" value="CAP/MinC_C"/>
</dbReference>
<dbReference type="InterPro" id="IPR013033">
    <property type="entry name" value="MinC"/>
</dbReference>
<dbReference type="InterPro" id="IPR036145">
    <property type="entry name" value="MinC_C_sf"/>
</dbReference>
<dbReference type="InterPro" id="IPR007874">
    <property type="entry name" value="MinC_N"/>
</dbReference>
<dbReference type="InterPro" id="IPR005526">
    <property type="entry name" value="Septum_form_inhib_MinC_C"/>
</dbReference>
<dbReference type="NCBIfam" id="TIGR01222">
    <property type="entry name" value="minC"/>
    <property type="match status" value="1"/>
</dbReference>
<dbReference type="PANTHER" id="PTHR34108">
    <property type="entry name" value="SEPTUM SITE-DETERMINING PROTEIN MINC"/>
    <property type="match status" value="1"/>
</dbReference>
<dbReference type="PANTHER" id="PTHR34108:SF1">
    <property type="entry name" value="SEPTUM SITE-DETERMINING PROTEIN MINC"/>
    <property type="match status" value="1"/>
</dbReference>
<dbReference type="Pfam" id="PF03775">
    <property type="entry name" value="MinC_C"/>
    <property type="match status" value="1"/>
</dbReference>
<dbReference type="Pfam" id="PF05209">
    <property type="entry name" value="MinC_N"/>
    <property type="match status" value="1"/>
</dbReference>
<dbReference type="SUPFAM" id="SSF63848">
    <property type="entry name" value="Cell-division inhibitor MinC, C-terminal domain"/>
    <property type="match status" value="1"/>
</dbReference>
<protein>
    <recommendedName>
        <fullName evidence="1">Probable septum site-determining protein MinC</fullName>
    </recommendedName>
</protein>
<comment type="function">
    <text evidence="1">Cell division inhibitor that blocks the formation of polar Z ring septums. Rapidly oscillates between the poles of the cell to destabilize FtsZ filaments that have formed before they mature into polar Z rings. Prevents FtsZ polymerization.</text>
</comment>
<comment type="subunit">
    <text evidence="1">Interacts with MinD and FtsZ.</text>
</comment>
<comment type="similarity">
    <text evidence="1">Belongs to the MinC family.</text>
</comment>
<gene>
    <name evidence="1" type="primary">minC</name>
    <name type="ordered locus">Sfri_1737</name>
</gene>
<accession>Q083H8</accession>
<feature type="chain" id="PRO_1000047858" description="Probable septum site-determining protein MinC">
    <location>
        <begin position="1"/>
        <end position="221"/>
    </location>
</feature>
<name>MINC_SHEFN</name>
<evidence type="ECO:0000255" key="1">
    <source>
        <dbReference type="HAMAP-Rule" id="MF_00267"/>
    </source>
</evidence>
<reference key="1">
    <citation type="submission" date="2006-08" db="EMBL/GenBank/DDBJ databases">
        <title>Complete sequence of Shewanella frigidimarina NCIMB 400.</title>
        <authorList>
            <consortium name="US DOE Joint Genome Institute"/>
            <person name="Copeland A."/>
            <person name="Lucas S."/>
            <person name="Lapidus A."/>
            <person name="Barry K."/>
            <person name="Detter J.C."/>
            <person name="Glavina del Rio T."/>
            <person name="Hammon N."/>
            <person name="Israni S."/>
            <person name="Dalin E."/>
            <person name="Tice H."/>
            <person name="Pitluck S."/>
            <person name="Fredrickson J.K."/>
            <person name="Kolker E."/>
            <person name="McCuel L.A."/>
            <person name="DiChristina T."/>
            <person name="Nealson K.H."/>
            <person name="Newman D."/>
            <person name="Tiedje J.M."/>
            <person name="Zhou J."/>
            <person name="Romine M.F."/>
            <person name="Culley D.E."/>
            <person name="Serres M."/>
            <person name="Chertkov O."/>
            <person name="Brettin T."/>
            <person name="Bruce D."/>
            <person name="Han C."/>
            <person name="Tapia R."/>
            <person name="Gilna P."/>
            <person name="Schmutz J."/>
            <person name="Larimer F."/>
            <person name="Land M."/>
            <person name="Hauser L."/>
            <person name="Kyrpides N."/>
            <person name="Mikhailova N."/>
            <person name="Richardson P."/>
        </authorList>
    </citation>
    <scope>NUCLEOTIDE SEQUENCE [LARGE SCALE GENOMIC DNA]</scope>
    <source>
        <strain>NCIMB 400</strain>
    </source>
</reference>